<accession>Q835U8</accession>
<dbReference type="EMBL" id="AE016830">
    <property type="protein sequence ID" value="AAO81067.1"/>
    <property type="molecule type" value="Genomic_DNA"/>
</dbReference>
<dbReference type="RefSeq" id="NP_814997.1">
    <property type="nucleotide sequence ID" value="NC_004668.1"/>
</dbReference>
<dbReference type="RefSeq" id="WP_002357859.1">
    <property type="nucleotide sequence ID" value="NZ_KE136528.1"/>
</dbReference>
<dbReference type="SMR" id="Q835U8"/>
<dbReference type="STRING" id="226185.EF_1274"/>
<dbReference type="EnsemblBacteria" id="AAO81067">
    <property type="protein sequence ID" value="AAO81067"/>
    <property type="gene ID" value="EF_1274"/>
</dbReference>
<dbReference type="KEGG" id="efa:EF1274"/>
<dbReference type="PATRIC" id="fig|226185.45.peg.2228"/>
<dbReference type="eggNOG" id="COG0532">
    <property type="taxonomic scope" value="Bacteria"/>
</dbReference>
<dbReference type="HOGENOM" id="CLU_006301_5_0_9"/>
<dbReference type="Proteomes" id="UP000001415">
    <property type="component" value="Chromosome"/>
</dbReference>
<dbReference type="GO" id="GO:0005829">
    <property type="term" value="C:cytosol"/>
    <property type="evidence" value="ECO:0007669"/>
    <property type="project" value="TreeGrafter"/>
</dbReference>
<dbReference type="GO" id="GO:0005525">
    <property type="term" value="F:GTP binding"/>
    <property type="evidence" value="ECO:0007669"/>
    <property type="project" value="UniProtKB-KW"/>
</dbReference>
<dbReference type="GO" id="GO:0003924">
    <property type="term" value="F:GTPase activity"/>
    <property type="evidence" value="ECO:0007669"/>
    <property type="project" value="UniProtKB-UniRule"/>
</dbReference>
<dbReference type="GO" id="GO:0003743">
    <property type="term" value="F:translation initiation factor activity"/>
    <property type="evidence" value="ECO:0007669"/>
    <property type="project" value="UniProtKB-UniRule"/>
</dbReference>
<dbReference type="CDD" id="cd01887">
    <property type="entry name" value="IF2_eIF5B"/>
    <property type="match status" value="1"/>
</dbReference>
<dbReference type="CDD" id="cd03702">
    <property type="entry name" value="IF2_mtIF2_II"/>
    <property type="match status" value="1"/>
</dbReference>
<dbReference type="CDD" id="cd03692">
    <property type="entry name" value="mtIF2_IVc"/>
    <property type="match status" value="1"/>
</dbReference>
<dbReference type="FunFam" id="2.40.30.10:FF:000007">
    <property type="entry name" value="Translation initiation factor IF-2"/>
    <property type="match status" value="1"/>
</dbReference>
<dbReference type="FunFam" id="2.40.30.10:FF:000008">
    <property type="entry name" value="Translation initiation factor IF-2"/>
    <property type="match status" value="1"/>
</dbReference>
<dbReference type="FunFam" id="3.40.50.10050:FF:000001">
    <property type="entry name" value="Translation initiation factor IF-2"/>
    <property type="match status" value="1"/>
</dbReference>
<dbReference type="FunFam" id="3.40.50.300:FF:000019">
    <property type="entry name" value="Translation initiation factor IF-2"/>
    <property type="match status" value="1"/>
</dbReference>
<dbReference type="Gene3D" id="1.10.10.2480">
    <property type="match status" value="1"/>
</dbReference>
<dbReference type="Gene3D" id="3.40.50.300">
    <property type="entry name" value="P-loop containing nucleotide triphosphate hydrolases"/>
    <property type="match status" value="1"/>
</dbReference>
<dbReference type="Gene3D" id="2.40.30.10">
    <property type="entry name" value="Translation factors"/>
    <property type="match status" value="2"/>
</dbReference>
<dbReference type="Gene3D" id="3.40.50.10050">
    <property type="entry name" value="Translation initiation factor IF- 2, domain 3"/>
    <property type="match status" value="1"/>
</dbReference>
<dbReference type="HAMAP" id="MF_00100_B">
    <property type="entry name" value="IF_2_B"/>
    <property type="match status" value="1"/>
</dbReference>
<dbReference type="InterPro" id="IPR053905">
    <property type="entry name" value="EF-G-like_DII"/>
</dbReference>
<dbReference type="InterPro" id="IPR044145">
    <property type="entry name" value="IF2_II"/>
</dbReference>
<dbReference type="InterPro" id="IPR006847">
    <property type="entry name" value="IF2_N"/>
</dbReference>
<dbReference type="InterPro" id="IPR027417">
    <property type="entry name" value="P-loop_NTPase"/>
</dbReference>
<dbReference type="InterPro" id="IPR005225">
    <property type="entry name" value="Small_GTP-bd"/>
</dbReference>
<dbReference type="InterPro" id="IPR000795">
    <property type="entry name" value="T_Tr_GTP-bd_dom"/>
</dbReference>
<dbReference type="InterPro" id="IPR000178">
    <property type="entry name" value="TF_IF2_bacterial-like"/>
</dbReference>
<dbReference type="InterPro" id="IPR015760">
    <property type="entry name" value="TIF_IF2"/>
</dbReference>
<dbReference type="InterPro" id="IPR023115">
    <property type="entry name" value="TIF_IF2_dom3"/>
</dbReference>
<dbReference type="InterPro" id="IPR036925">
    <property type="entry name" value="TIF_IF2_dom3_sf"/>
</dbReference>
<dbReference type="InterPro" id="IPR009000">
    <property type="entry name" value="Transl_B-barrel_sf"/>
</dbReference>
<dbReference type="NCBIfam" id="TIGR00487">
    <property type="entry name" value="IF-2"/>
    <property type="match status" value="1"/>
</dbReference>
<dbReference type="NCBIfam" id="TIGR00231">
    <property type="entry name" value="small_GTP"/>
    <property type="match status" value="1"/>
</dbReference>
<dbReference type="PANTHER" id="PTHR43381:SF5">
    <property type="entry name" value="TR-TYPE G DOMAIN-CONTAINING PROTEIN"/>
    <property type="match status" value="1"/>
</dbReference>
<dbReference type="PANTHER" id="PTHR43381">
    <property type="entry name" value="TRANSLATION INITIATION FACTOR IF-2-RELATED"/>
    <property type="match status" value="1"/>
</dbReference>
<dbReference type="Pfam" id="PF22042">
    <property type="entry name" value="EF-G_D2"/>
    <property type="match status" value="1"/>
</dbReference>
<dbReference type="Pfam" id="PF00009">
    <property type="entry name" value="GTP_EFTU"/>
    <property type="match status" value="1"/>
</dbReference>
<dbReference type="Pfam" id="PF11987">
    <property type="entry name" value="IF-2"/>
    <property type="match status" value="1"/>
</dbReference>
<dbReference type="Pfam" id="PF04760">
    <property type="entry name" value="IF2_N"/>
    <property type="match status" value="2"/>
</dbReference>
<dbReference type="SUPFAM" id="SSF52156">
    <property type="entry name" value="Initiation factor IF2/eIF5b, domain 3"/>
    <property type="match status" value="1"/>
</dbReference>
<dbReference type="SUPFAM" id="SSF52540">
    <property type="entry name" value="P-loop containing nucleoside triphosphate hydrolases"/>
    <property type="match status" value="1"/>
</dbReference>
<dbReference type="SUPFAM" id="SSF50447">
    <property type="entry name" value="Translation proteins"/>
    <property type="match status" value="2"/>
</dbReference>
<dbReference type="PROSITE" id="PS51722">
    <property type="entry name" value="G_TR_2"/>
    <property type="match status" value="1"/>
</dbReference>
<dbReference type="PROSITE" id="PS01176">
    <property type="entry name" value="IF2"/>
    <property type="match status" value="1"/>
</dbReference>
<reference key="1">
    <citation type="journal article" date="2003" name="Science">
        <title>Role of mobile DNA in the evolution of vancomycin-resistant Enterococcus faecalis.</title>
        <authorList>
            <person name="Paulsen I.T."/>
            <person name="Banerjei L."/>
            <person name="Myers G.S.A."/>
            <person name="Nelson K.E."/>
            <person name="Seshadri R."/>
            <person name="Read T.D."/>
            <person name="Fouts D.E."/>
            <person name="Eisen J.A."/>
            <person name="Gill S.R."/>
            <person name="Heidelberg J.F."/>
            <person name="Tettelin H."/>
            <person name="Dodson R.J."/>
            <person name="Umayam L.A."/>
            <person name="Brinkac L.M."/>
            <person name="Beanan M.J."/>
            <person name="Daugherty S.C."/>
            <person name="DeBoy R.T."/>
            <person name="Durkin S.A."/>
            <person name="Kolonay J.F."/>
            <person name="Madupu R."/>
            <person name="Nelson W.C."/>
            <person name="Vamathevan J.J."/>
            <person name="Tran B."/>
            <person name="Upton J."/>
            <person name="Hansen T."/>
            <person name="Shetty J."/>
            <person name="Khouri H.M."/>
            <person name="Utterback T.R."/>
            <person name="Radune D."/>
            <person name="Ketchum K.A."/>
            <person name="Dougherty B.A."/>
            <person name="Fraser C.M."/>
        </authorList>
    </citation>
    <scope>NUCLEOTIDE SEQUENCE [LARGE SCALE GENOMIC DNA]</scope>
    <source>
        <strain>ATCC 700802 / V583</strain>
    </source>
</reference>
<comment type="function">
    <text evidence="2">One of the essential components for the initiation of protein synthesis. Protects formylmethionyl-tRNA from spontaneous hydrolysis and promotes its binding to the 30S ribosomal subunits. Also involved in the hydrolysis of GTP during the formation of the 70S ribosomal complex.</text>
</comment>
<comment type="subcellular location">
    <subcellularLocation>
        <location evidence="2">Cytoplasm</location>
    </subcellularLocation>
</comment>
<comment type="similarity">
    <text evidence="2">Belongs to the TRAFAC class translation factor GTPase superfamily. Classic translation factor GTPase family. IF-2 subfamily.</text>
</comment>
<sequence>MGKKRIYELAKEMNKASKDVVDKAHQLGMDVKNHMGAISSEQETKLRQAFGGGSTVNTQSKATNNQKQQTTQNKPANKKPMNNKPGEQRNNQNRPNNQSTNGQQRNNNNQNRHGQSNTQNRSNQTNTNNQNRNTQNNNGSTTNQNRTSQNNNGGNNQNRGGQNRNNNFGGGQNRNNRNNFNNQNRNRFNKKGKKGKHQQESAKPAVPARKFRELPDVLEYTEGMNVADIAKKIHREPAEIIKKLFMMGVMVNQNQALDKDTIELLAVDYGMEPQEKVQVDIADIDKFFEPEAVVEENLTTRPPVVTIMGHVDHGKTTLLDTLRHSRVTSGEAGGITQHIGAYQLDIDGKPITFLDTPGHAAFTSMRARGASITDITILVVAADDGVMPQTIEAINHAKAAKVPIIVAVNKIDKPGANPDHVKQELSEHELIPEEWGGDTIFVNISAKFNQNIDELLENILLIAEVEDLKADPTQKAIGTVIEARLDKGKGPVATLLVQQGTLHVGDPIVVGNTYGRVRVMTNDMGRRDKEAGPATPVEITGLNDVPQAGDRFVVFEDEKTARQAGEERAKRALLEQRSASSRVTLDNLFESLKEGELKEVNIIVKADVQGSAEAVSASLQKIDVEGVRVKIVHAAVGAINESDVTLAAASNAIIIGFNVRPTPQAKQQAEQEEVDIRLHRIIYKALEEIETAMKGLLDPEFEEKITGQMTVRELYKVSKVGTIAGCYVTEGFIRRDSGVRVIRDGIVIYEGKLASLKRFKDDVKEVKLGFECGAMIENFNDLRVDDAIEGFIMEEIKQ</sequence>
<evidence type="ECO:0000250" key="1"/>
<evidence type="ECO:0000255" key="2">
    <source>
        <dbReference type="HAMAP-Rule" id="MF_00100"/>
    </source>
</evidence>
<evidence type="ECO:0000256" key="3">
    <source>
        <dbReference type="SAM" id="MobiDB-lite"/>
    </source>
</evidence>
<keyword id="KW-0963">Cytoplasm</keyword>
<keyword id="KW-0342">GTP-binding</keyword>
<keyword id="KW-0396">Initiation factor</keyword>
<keyword id="KW-0547">Nucleotide-binding</keyword>
<keyword id="KW-0648">Protein biosynthesis</keyword>
<keyword id="KW-1185">Reference proteome</keyword>
<name>IF2_ENTFA</name>
<feature type="chain" id="PRO_0000137202" description="Translation initiation factor IF-2">
    <location>
        <begin position="1"/>
        <end position="798"/>
    </location>
</feature>
<feature type="domain" description="tr-type G">
    <location>
        <begin position="300"/>
        <end position="469"/>
    </location>
</feature>
<feature type="region of interest" description="Disordered" evidence="3">
    <location>
        <begin position="40"/>
        <end position="207"/>
    </location>
</feature>
<feature type="region of interest" description="G1" evidence="1">
    <location>
        <begin position="309"/>
        <end position="316"/>
    </location>
</feature>
<feature type="region of interest" description="G2" evidence="1">
    <location>
        <begin position="334"/>
        <end position="338"/>
    </location>
</feature>
<feature type="region of interest" description="G3" evidence="1">
    <location>
        <begin position="355"/>
        <end position="358"/>
    </location>
</feature>
<feature type="region of interest" description="G4" evidence="1">
    <location>
        <begin position="409"/>
        <end position="412"/>
    </location>
</feature>
<feature type="region of interest" description="G5" evidence="1">
    <location>
        <begin position="445"/>
        <end position="447"/>
    </location>
</feature>
<feature type="compositionally biased region" description="Low complexity" evidence="3">
    <location>
        <begin position="57"/>
        <end position="186"/>
    </location>
</feature>
<feature type="compositionally biased region" description="Basic residues" evidence="3">
    <location>
        <begin position="187"/>
        <end position="196"/>
    </location>
</feature>
<feature type="binding site" evidence="2">
    <location>
        <begin position="309"/>
        <end position="316"/>
    </location>
    <ligand>
        <name>GTP</name>
        <dbReference type="ChEBI" id="CHEBI:37565"/>
    </ligand>
</feature>
<feature type="binding site" evidence="2">
    <location>
        <begin position="355"/>
        <end position="359"/>
    </location>
    <ligand>
        <name>GTP</name>
        <dbReference type="ChEBI" id="CHEBI:37565"/>
    </ligand>
</feature>
<feature type="binding site" evidence="2">
    <location>
        <begin position="409"/>
        <end position="412"/>
    </location>
    <ligand>
        <name>GTP</name>
        <dbReference type="ChEBI" id="CHEBI:37565"/>
    </ligand>
</feature>
<gene>
    <name evidence="2" type="primary">infB</name>
    <name type="ordered locus">EF_1274</name>
</gene>
<proteinExistence type="inferred from homology"/>
<protein>
    <recommendedName>
        <fullName evidence="2">Translation initiation factor IF-2</fullName>
    </recommendedName>
</protein>
<organism>
    <name type="scientific">Enterococcus faecalis (strain ATCC 700802 / V583)</name>
    <dbReference type="NCBI Taxonomy" id="226185"/>
    <lineage>
        <taxon>Bacteria</taxon>
        <taxon>Bacillati</taxon>
        <taxon>Bacillota</taxon>
        <taxon>Bacilli</taxon>
        <taxon>Lactobacillales</taxon>
        <taxon>Enterococcaceae</taxon>
        <taxon>Enterococcus</taxon>
    </lineage>
</organism>